<protein>
    <recommendedName>
        <fullName evidence="1">3-dehydroquinate synthase</fullName>
        <shortName evidence="1">DHQ synthase</shortName>
        <ecNumber evidence="1">1.4.1.24</ecNumber>
    </recommendedName>
    <alternativeName>
        <fullName evidence="1">3-dehydroquinate synthase II</fullName>
    </alternativeName>
</protein>
<reference key="1">
    <citation type="submission" date="2007-06" db="EMBL/GenBank/DDBJ databases">
        <title>Complete sequence of Methanococcus aeolicus Nankai-3.</title>
        <authorList>
            <consortium name="US DOE Joint Genome Institute"/>
            <person name="Copeland A."/>
            <person name="Lucas S."/>
            <person name="Lapidus A."/>
            <person name="Barry K."/>
            <person name="Glavina del Rio T."/>
            <person name="Dalin E."/>
            <person name="Tice H."/>
            <person name="Pitluck S."/>
            <person name="Chain P."/>
            <person name="Malfatti S."/>
            <person name="Shin M."/>
            <person name="Vergez L."/>
            <person name="Schmutz J."/>
            <person name="Larimer F."/>
            <person name="Land M."/>
            <person name="Hauser L."/>
            <person name="Kyrpides N."/>
            <person name="Lykidis A."/>
            <person name="Sieprawska-Lupa M."/>
            <person name="Whitman W.B."/>
            <person name="Richardson P."/>
        </authorList>
    </citation>
    <scope>NUCLEOTIDE SEQUENCE [LARGE SCALE GENOMIC DNA]</scope>
    <source>
        <strain>ATCC BAA-1280 / DSM 17508 / OCM 812 / Nankai-3</strain>
    </source>
</reference>
<comment type="function">
    <text evidence="1">Catalyzes the oxidative deamination and cyclization of 2-amino-3,7-dideoxy-D-threo-hept-6-ulosonic acid (ADH) to yield 3-dehydroquinate (DHQ), which is fed into the canonical shikimic pathway of aromatic amino acid biosynthesis.</text>
</comment>
<comment type="catalytic activity">
    <reaction evidence="1">
        <text>2-amino-2,3,7-trideoxy-D-lyxo-hept-6-ulosonate + NAD(+) + H2O = 3-dehydroquinate + NH4(+) + NADH + H(+)</text>
        <dbReference type="Rhea" id="RHEA:25956"/>
        <dbReference type="ChEBI" id="CHEBI:15377"/>
        <dbReference type="ChEBI" id="CHEBI:15378"/>
        <dbReference type="ChEBI" id="CHEBI:28938"/>
        <dbReference type="ChEBI" id="CHEBI:32364"/>
        <dbReference type="ChEBI" id="CHEBI:57540"/>
        <dbReference type="ChEBI" id="CHEBI:57945"/>
        <dbReference type="ChEBI" id="CHEBI:58859"/>
        <dbReference type="EC" id="1.4.1.24"/>
    </reaction>
</comment>
<comment type="similarity">
    <text evidence="1">Belongs to the archaeal-type DHQ synthase family.</text>
</comment>
<evidence type="ECO:0000255" key="1">
    <source>
        <dbReference type="HAMAP-Rule" id="MF_01244"/>
    </source>
</evidence>
<gene>
    <name evidence="1" type="primary">aroB'</name>
    <name type="ordered locus">Maeo_1164</name>
</gene>
<keyword id="KW-0028">Amino-acid biosynthesis</keyword>
<keyword id="KW-0057">Aromatic amino acid biosynthesis</keyword>
<keyword id="KW-0520">NAD</keyword>
<keyword id="KW-0560">Oxidoreductase</keyword>
<proteinExistence type="inferred from homology"/>
<sequence length="362" mass="40531">MKFGWIMANDEDWEERKETVKDSLESSIPAVMVYEEDIEKVKELGNIKTISKNPNSDIVVIDKGDDLTILFDAKKEGKETGVFISIECKEDEEYASEVSRYDYVDYIILEGKDWNIIPLENLIADLFDENIKIVSLAKDINDARTAYEILERGVDGVLYVPKDINDVKDFATLIEKMNSEKLDLDCATITKVEAIGSGDRVCIDTCSMMEMGEGMLIGSYSRALFLVHAETVENPYVATRPFRVNAGPVHAYVLCTGNKTRYLSELKAGDGILIVDKDGMTREGIVGRVKIEKRPLMLIEAEYVGGEIVRTIVQNAETIRLVNENGAPISVVDLKVGDKVKLKIDTNARHFGMAIQETIIEK</sequence>
<name>DHQS_META3</name>
<organism>
    <name type="scientific">Methanococcus aeolicus (strain ATCC BAA-1280 / DSM 17508 / OCM 812 / Nankai-3)</name>
    <dbReference type="NCBI Taxonomy" id="419665"/>
    <lineage>
        <taxon>Archaea</taxon>
        <taxon>Methanobacteriati</taxon>
        <taxon>Methanobacteriota</taxon>
        <taxon>Methanomada group</taxon>
        <taxon>Methanococci</taxon>
        <taxon>Methanococcales</taxon>
        <taxon>Methanococcaceae</taxon>
        <taxon>Methanococcus</taxon>
    </lineage>
</organism>
<feature type="chain" id="PRO_1000067064" description="3-dehydroquinate synthase">
    <location>
        <begin position="1"/>
        <end position="362"/>
    </location>
</feature>
<accession>A6UW69</accession>
<dbReference type="EC" id="1.4.1.24" evidence="1"/>
<dbReference type="EMBL" id="CP000743">
    <property type="protein sequence ID" value="ABR56741.1"/>
    <property type="molecule type" value="Genomic_DNA"/>
</dbReference>
<dbReference type="RefSeq" id="WP_011973873.1">
    <property type="nucleotide sequence ID" value="NC_009635.1"/>
</dbReference>
<dbReference type="STRING" id="419665.Maeo_1164"/>
<dbReference type="GeneID" id="5327715"/>
<dbReference type="KEGG" id="mae:Maeo_1164"/>
<dbReference type="eggNOG" id="arCOG04353">
    <property type="taxonomic scope" value="Archaea"/>
</dbReference>
<dbReference type="HOGENOM" id="CLU_056379_0_0_2"/>
<dbReference type="OrthoDB" id="10265at2157"/>
<dbReference type="Proteomes" id="UP000001106">
    <property type="component" value="Chromosome"/>
</dbReference>
<dbReference type="GO" id="GO:0003856">
    <property type="term" value="F:3-dehydroquinate synthase activity"/>
    <property type="evidence" value="ECO:0007669"/>
    <property type="project" value="InterPro"/>
</dbReference>
<dbReference type="GO" id="GO:0102042">
    <property type="term" value="F:dehydroquinate synthase activity"/>
    <property type="evidence" value="ECO:0007669"/>
    <property type="project" value="UniProtKB-EC"/>
</dbReference>
<dbReference type="GO" id="GO:0051287">
    <property type="term" value="F:NAD binding"/>
    <property type="evidence" value="ECO:0007669"/>
    <property type="project" value="UniProtKB-UniRule"/>
</dbReference>
<dbReference type="GO" id="GO:0008652">
    <property type="term" value="P:amino acid biosynthetic process"/>
    <property type="evidence" value="ECO:0007669"/>
    <property type="project" value="UniProtKB-KW"/>
</dbReference>
<dbReference type="GO" id="GO:0009073">
    <property type="term" value="P:aromatic amino acid family biosynthetic process"/>
    <property type="evidence" value="ECO:0007669"/>
    <property type="project" value="UniProtKB-UniRule"/>
</dbReference>
<dbReference type="HAMAP" id="MF_01244">
    <property type="entry name" value="Arch_DHQ_synthase"/>
    <property type="match status" value="1"/>
</dbReference>
<dbReference type="InterPro" id="IPR002812">
    <property type="entry name" value="DHQ_synth"/>
</dbReference>
<dbReference type="NCBIfam" id="NF002624">
    <property type="entry name" value="PRK02290.1-2"/>
    <property type="match status" value="1"/>
</dbReference>
<dbReference type="PANTHER" id="PTHR33563">
    <property type="match status" value="1"/>
</dbReference>
<dbReference type="PANTHER" id="PTHR33563:SF1">
    <property type="entry name" value="3-DEHYDROQUINATE SYNTHASE"/>
    <property type="match status" value="1"/>
</dbReference>
<dbReference type="Pfam" id="PF01959">
    <property type="entry name" value="DHQS"/>
    <property type="match status" value="1"/>
</dbReference>
<dbReference type="PIRSF" id="PIRSF006655">
    <property type="entry name" value="DHQ_synth"/>
    <property type="match status" value="1"/>
</dbReference>